<reference key="1">
    <citation type="submission" date="2008-06" db="EMBL/GenBank/DDBJ databases">
        <title>Lactobacillus casei BL23 complete genome sequence.</title>
        <authorList>
            <person name="Maze A."/>
            <person name="Boel G."/>
            <person name="Bourand A."/>
            <person name="Loux V."/>
            <person name="Gibrat J.F."/>
            <person name="Zuniga M."/>
            <person name="Hartke A."/>
            <person name="Deutscher J."/>
        </authorList>
    </citation>
    <scope>NUCLEOTIDE SEQUENCE [LARGE SCALE GENOMIC DNA]</scope>
    <source>
        <strain>BL23</strain>
    </source>
</reference>
<gene>
    <name evidence="1" type="primary">murG</name>
    <name type="ordered locus">LCABL_15020</name>
</gene>
<keyword id="KW-0131">Cell cycle</keyword>
<keyword id="KW-0132">Cell division</keyword>
<keyword id="KW-1003">Cell membrane</keyword>
<keyword id="KW-0133">Cell shape</keyword>
<keyword id="KW-0961">Cell wall biogenesis/degradation</keyword>
<keyword id="KW-0328">Glycosyltransferase</keyword>
<keyword id="KW-0472">Membrane</keyword>
<keyword id="KW-0573">Peptidoglycan synthesis</keyword>
<keyword id="KW-0808">Transferase</keyword>
<accession>B3WDY2</accession>
<feature type="chain" id="PRO_1000090442" description="UDP-N-acetylglucosamine--N-acetylmuramyl-(pentapeptide) pyrophosphoryl-undecaprenol N-acetylglucosamine transferase">
    <location>
        <begin position="1"/>
        <end position="363"/>
    </location>
</feature>
<feature type="binding site" evidence="1">
    <location>
        <begin position="10"/>
        <end position="12"/>
    </location>
    <ligand>
        <name>UDP-N-acetyl-alpha-D-glucosamine</name>
        <dbReference type="ChEBI" id="CHEBI:57705"/>
    </ligand>
</feature>
<feature type="binding site" evidence="1">
    <location>
        <position position="124"/>
    </location>
    <ligand>
        <name>UDP-N-acetyl-alpha-D-glucosamine</name>
        <dbReference type="ChEBI" id="CHEBI:57705"/>
    </ligand>
</feature>
<feature type="binding site" evidence="1">
    <location>
        <position position="195"/>
    </location>
    <ligand>
        <name>UDP-N-acetyl-alpha-D-glucosamine</name>
        <dbReference type="ChEBI" id="CHEBI:57705"/>
    </ligand>
</feature>
<feature type="binding site" evidence="1">
    <location>
        <position position="248"/>
    </location>
    <ligand>
        <name>UDP-N-acetyl-alpha-D-glucosamine</name>
        <dbReference type="ChEBI" id="CHEBI:57705"/>
    </ligand>
</feature>
<feature type="binding site" evidence="1">
    <location>
        <position position="293"/>
    </location>
    <ligand>
        <name>UDP-N-acetyl-alpha-D-glucosamine</name>
        <dbReference type="ChEBI" id="CHEBI:57705"/>
    </ligand>
</feature>
<name>MURG_LACCB</name>
<comment type="function">
    <text evidence="1">Cell wall formation. Catalyzes the transfer of a GlcNAc subunit on undecaprenyl-pyrophosphoryl-MurNAc-pentapeptide (lipid intermediate I) to form undecaprenyl-pyrophosphoryl-MurNAc-(pentapeptide)GlcNAc (lipid intermediate II).</text>
</comment>
<comment type="catalytic activity">
    <reaction evidence="1">
        <text>Mur2Ac(oyl-L-Ala-gamma-D-Glu-L-Lys-D-Ala-D-Ala)-di-trans,octa-cis-undecaprenyl diphosphate + UDP-N-acetyl-alpha-D-glucosamine = beta-D-GlcNAc-(1-&gt;4)-Mur2Ac(oyl-L-Ala-gamma-D-Glu-L-Lys-D-Ala-D-Ala)-di-trans,octa-cis-undecaprenyl diphosphate + UDP + H(+)</text>
        <dbReference type="Rhea" id="RHEA:23192"/>
        <dbReference type="ChEBI" id="CHEBI:15378"/>
        <dbReference type="ChEBI" id="CHEBI:57705"/>
        <dbReference type="ChEBI" id="CHEBI:58223"/>
        <dbReference type="ChEBI" id="CHEBI:60032"/>
        <dbReference type="ChEBI" id="CHEBI:60033"/>
        <dbReference type="EC" id="2.4.1.227"/>
    </reaction>
</comment>
<comment type="pathway">
    <text evidence="1">Cell wall biogenesis; peptidoglycan biosynthesis.</text>
</comment>
<comment type="subcellular location">
    <subcellularLocation>
        <location evidence="1">Cell membrane</location>
        <topology evidence="1">Peripheral membrane protein</topology>
        <orientation evidence="1">Cytoplasmic side</orientation>
    </subcellularLocation>
</comment>
<comment type="similarity">
    <text evidence="1">Belongs to the glycosyltransferase 28 family. MurG subfamily.</text>
</comment>
<dbReference type="EC" id="2.4.1.227" evidence="1"/>
<dbReference type="EMBL" id="FM177140">
    <property type="protein sequence ID" value="CAQ66583.1"/>
    <property type="molecule type" value="Genomic_DNA"/>
</dbReference>
<dbReference type="SMR" id="B3WDY2"/>
<dbReference type="CAZy" id="GT28">
    <property type="family name" value="Glycosyltransferase Family 28"/>
</dbReference>
<dbReference type="KEGG" id="lcb:LCABL_15020"/>
<dbReference type="HOGENOM" id="CLU_037404_0_1_9"/>
<dbReference type="UniPathway" id="UPA00219"/>
<dbReference type="GO" id="GO:0005886">
    <property type="term" value="C:plasma membrane"/>
    <property type="evidence" value="ECO:0007669"/>
    <property type="project" value="UniProtKB-SubCell"/>
</dbReference>
<dbReference type="GO" id="GO:0050511">
    <property type="term" value="F:undecaprenyldiphospho-muramoylpentapeptide beta-N-acetylglucosaminyltransferase activity"/>
    <property type="evidence" value="ECO:0007669"/>
    <property type="project" value="UniProtKB-UniRule"/>
</dbReference>
<dbReference type="GO" id="GO:0005975">
    <property type="term" value="P:carbohydrate metabolic process"/>
    <property type="evidence" value="ECO:0007669"/>
    <property type="project" value="InterPro"/>
</dbReference>
<dbReference type="GO" id="GO:0051301">
    <property type="term" value="P:cell division"/>
    <property type="evidence" value="ECO:0007669"/>
    <property type="project" value="UniProtKB-KW"/>
</dbReference>
<dbReference type="GO" id="GO:0071555">
    <property type="term" value="P:cell wall organization"/>
    <property type="evidence" value="ECO:0007669"/>
    <property type="project" value="UniProtKB-KW"/>
</dbReference>
<dbReference type="GO" id="GO:0030259">
    <property type="term" value="P:lipid glycosylation"/>
    <property type="evidence" value="ECO:0007669"/>
    <property type="project" value="UniProtKB-UniRule"/>
</dbReference>
<dbReference type="GO" id="GO:0009252">
    <property type="term" value="P:peptidoglycan biosynthetic process"/>
    <property type="evidence" value="ECO:0007669"/>
    <property type="project" value="UniProtKB-UniRule"/>
</dbReference>
<dbReference type="GO" id="GO:0008360">
    <property type="term" value="P:regulation of cell shape"/>
    <property type="evidence" value="ECO:0007669"/>
    <property type="project" value="UniProtKB-KW"/>
</dbReference>
<dbReference type="CDD" id="cd03785">
    <property type="entry name" value="GT28_MurG"/>
    <property type="match status" value="1"/>
</dbReference>
<dbReference type="Gene3D" id="3.40.50.2000">
    <property type="entry name" value="Glycogen Phosphorylase B"/>
    <property type="match status" value="2"/>
</dbReference>
<dbReference type="HAMAP" id="MF_00033">
    <property type="entry name" value="MurG"/>
    <property type="match status" value="1"/>
</dbReference>
<dbReference type="InterPro" id="IPR006009">
    <property type="entry name" value="GlcNAc_MurG"/>
</dbReference>
<dbReference type="InterPro" id="IPR007235">
    <property type="entry name" value="Glyco_trans_28_C"/>
</dbReference>
<dbReference type="InterPro" id="IPR004276">
    <property type="entry name" value="GlycoTrans_28_N"/>
</dbReference>
<dbReference type="NCBIfam" id="TIGR01133">
    <property type="entry name" value="murG"/>
    <property type="match status" value="1"/>
</dbReference>
<dbReference type="PANTHER" id="PTHR21015:SF22">
    <property type="entry name" value="GLYCOSYLTRANSFERASE"/>
    <property type="match status" value="1"/>
</dbReference>
<dbReference type="PANTHER" id="PTHR21015">
    <property type="entry name" value="UDP-N-ACETYLGLUCOSAMINE--N-ACETYLMURAMYL-(PENTAPEPTIDE) PYROPHOSPHORYL-UNDECAPRENOL N-ACETYLGLUCOSAMINE TRANSFERASE 1"/>
    <property type="match status" value="1"/>
</dbReference>
<dbReference type="Pfam" id="PF04101">
    <property type="entry name" value="Glyco_tran_28_C"/>
    <property type="match status" value="1"/>
</dbReference>
<dbReference type="Pfam" id="PF03033">
    <property type="entry name" value="Glyco_transf_28"/>
    <property type="match status" value="1"/>
</dbReference>
<dbReference type="SUPFAM" id="SSF53756">
    <property type="entry name" value="UDP-Glycosyltransferase/glycogen phosphorylase"/>
    <property type="match status" value="1"/>
</dbReference>
<organism>
    <name type="scientific">Lacticaseibacillus casei (strain BL23)</name>
    <name type="common">Lactobacillus casei</name>
    <dbReference type="NCBI Taxonomy" id="543734"/>
    <lineage>
        <taxon>Bacteria</taxon>
        <taxon>Bacillati</taxon>
        <taxon>Bacillota</taxon>
        <taxon>Bacilli</taxon>
        <taxon>Lactobacillales</taxon>
        <taxon>Lactobacillaceae</taxon>
        <taxon>Lacticaseibacillus</taxon>
    </lineage>
</organism>
<evidence type="ECO:0000255" key="1">
    <source>
        <dbReference type="HAMAP-Rule" id="MF_00033"/>
    </source>
</evidence>
<protein>
    <recommendedName>
        <fullName evidence="1">UDP-N-acetylglucosamine--N-acetylmuramyl-(pentapeptide) pyrophosphoryl-undecaprenol N-acetylglucosamine transferase</fullName>
        <ecNumber evidence="1">2.4.1.227</ecNumber>
    </recommendedName>
    <alternativeName>
        <fullName evidence="1">Undecaprenyl-PP-MurNAc-pentapeptide-UDPGlcNAc GlcNAc transferase</fullName>
    </alternativeName>
</protein>
<proteinExistence type="inferred from homology"/>
<sequence length="363" mass="38994">MRLVISGGGTGGHIYPALALIEALKAEGKLDDVLYVGTKRGLESRIVPATGLKFATLDLQGFKRSLSLSNFTTVRKFLGSLGEAKKLLQDFQPDIVVGTGGYVSGAILFAATRLHIPTVIHESNSVAGVTNKFLSHFVDRVAIVFPEVAKAFPANKVVVTGNPRAQQVAGLKPNDRLRDFGLDPHIRTLLAFGGSRGAPRINDAVVAALPIWAKADFQVLFATGRTHYDQIKAKLPDLPATIKVVPYIDDMPSILPDIGLLISRAGATTLAEITALGIPAVLIPSPNVTHHHQFLNAQSLTKQGAAITITEDELDNHFPRRVVTLMEDDEKRAAMAKASKKLGVPDASDQLIAVMTTLLSKRR</sequence>